<evidence type="ECO:0000255" key="1">
    <source>
        <dbReference type="HAMAP-Rule" id="MF_01894"/>
    </source>
</evidence>
<name>SMC_GLOVI</name>
<dbReference type="EMBL" id="BA000045">
    <property type="protein sequence ID" value="BAC91263.1"/>
    <property type="molecule type" value="Genomic_DNA"/>
</dbReference>
<dbReference type="RefSeq" id="NP_926268.1">
    <property type="nucleotide sequence ID" value="NC_005125.1"/>
</dbReference>
<dbReference type="RefSeq" id="WP_011143312.1">
    <property type="nucleotide sequence ID" value="NC_005125.1"/>
</dbReference>
<dbReference type="SMR" id="Q7NG51"/>
<dbReference type="FunCoup" id="Q7NG51">
    <property type="interactions" value="233"/>
</dbReference>
<dbReference type="STRING" id="251221.gene:10760833"/>
<dbReference type="EnsemblBacteria" id="BAC91263">
    <property type="protein sequence ID" value="BAC91263"/>
    <property type="gene ID" value="BAC91263"/>
</dbReference>
<dbReference type="KEGG" id="gvi:glr3322"/>
<dbReference type="PATRIC" id="fig|251221.4.peg.3353"/>
<dbReference type="eggNOG" id="COG1196">
    <property type="taxonomic scope" value="Bacteria"/>
</dbReference>
<dbReference type="HOGENOM" id="CLU_001042_2_2_3"/>
<dbReference type="InParanoid" id="Q7NG51"/>
<dbReference type="OrthoDB" id="9808768at2"/>
<dbReference type="PhylomeDB" id="Q7NG51"/>
<dbReference type="Proteomes" id="UP000000557">
    <property type="component" value="Chromosome"/>
</dbReference>
<dbReference type="GO" id="GO:0005694">
    <property type="term" value="C:chromosome"/>
    <property type="evidence" value="ECO:0007669"/>
    <property type="project" value="InterPro"/>
</dbReference>
<dbReference type="GO" id="GO:0005737">
    <property type="term" value="C:cytoplasm"/>
    <property type="evidence" value="ECO:0007669"/>
    <property type="project" value="UniProtKB-SubCell"/>
</dbReference>
<dbReference type="GO" id="GO:0005524">
    <property type="term" value="F:ATP binding"/>
    <property type="evidence" value="ECO:0007669"/>
    <property type="project" value="UniProtKB-UniRule"/>
</dbReference>
<dbReference type="GO" id="GO:0016887">
    <property type="term" value="F:ATP hydrolysis activity"/>
    <property type="evidence" value="ECO:0007669"/>
    <property type="project" value="InterPro"/>
</dbReference>
<dbReference type="GO" id="GO:0003677">
    <property type="term" value="F:DNA binding"/>
    <property type="evidence" value="ECO:0007669"/>
    <property type="project" value="UniProtKB-UniRule"/>
</dbReference>
<dbReference type="GO" id="GO:0030261">
    <property type="term" value="P:chromosome condensation"/>
    <property type="evidence" value="ECO:0007669"/>
    <property type="project" value="InterPro"/>
</dbReference>
<dbReference type="GO" id="GO:0007059">
    <property type="term" value="P:chromosome segregation"/>
    <property type="evidence" value="ECO:0007669"/>
    <property type="project" value="UniProtKB-UniRule"/>
</dbReference>
<dbReference type="GO" id="GO:0006260">
    <property type="term" value="P:DNA replication"/>
    <property type="evidence" value="ECO:0007669"/>
    <property type="project" value="UniProtKB-UniRule"/>
</dbReference>
<dbReference type="GO" id="GO:0007062">
    <property type="term" value="P:sister chromatid cohesion"/>
    <property type="evidence" value="ECO:0007669"/>
    <property type="project" value="InterPro"/>
</dbReference>
<dbReference type="CDD" id="cd03278">
    <property type="entry name" value="ABC_SMC_barmotin"/>
    <property type="match status" value="1"/>
</dbReference>
<dbReference type="Gene3D" id="1.20.1060.20">
    <property type="match status" value="1"/>
</dbReference>
<dbReference type="Gene3D" id="3.30.70.1620">
    <property type="match status" value="1"/>
</dbReference>
<dbReference type="Gene3D" id="3.40.50.300">
    <property type="entry name" value="P-loop containing nucleotide triphosphate hydrolases"/>
    <property type="match status" value="2"/>
</dbReference>
<dbReference type="HAMAP" id="MF_01894">
    <property type="entry name" value="Smc_prok"/>
    <property type="match status" value="1"/>
</dbReference>
<dbReference type="InterPro" id="IPR027417">
    <property type="entry name" value="P-loop_NTPase"/>
</dbReference>
<dbReference type="InterPro" id="IPR003395">
    <property type="entry name" value="RecF/RecN/SMC_N"/>
</dbReference>
<dbReference type="InterPro" id="IPR024704">
    <property type="entry name" value="SMC"/>
</dbReference>
<dbReference type="InterPro" id="IPR010935">
    <property type="entry name" value="SMC_hinge"/>
</dbReference>
<dbReference type="InterPro" id="IPR036277">
    <property type="entry name" value="SMC_hinge_sf"/>
</dbReference>
<dbReference type="InterPro" id="IPR011890">
    <property type="entry name" value="SMC_prok"/>
</dbReference>
<dbReference type="NCBIfam" id="TIGR02169">
    <property type="entry name" value="SMC_prok_A"/>
    <property type="match status" value="1"/>
</dbReference>
<dbReference type="NCBIfam" id="TIGR02168">
    <property type="entry name" value="SMC_prok_B"/>
    <property type="match status" value="1"/>
</dbReference>
<dbReference type="PANTHER" id="PTHR43977">
    <property type="entry name" value="STRUCTURAL MAINTENANCE OF CHROMOSOMES PROTEIN 3"/>
    <property type="match status" value="1"/>
</dbReference>
<dbReference type="Pfam" id="PF06470">
    <property type="entry name" value="SMC_hinge"/>
    <property type="match status" value="1"/>
</dbReference>
<dbReference type="Pfam" id="PF02463">
    <property type="entry name" value="SMC_N"/>
    <property type="match status" value="1"/>
</dbReference>
<dbReference type="PIRSF" id="PIRSF005719">
    <property type="entry name" value="SMC"/>
    <property type="match status" value="1"/>
</dbReference>
<dbReference type="SMART" id="SM00968">
    <property type="entry name" value="SMC_hinge"/>
    <property type="match status" value="1"/>
</dbReference>
<dbReference type="SUPFAM" id="SSF52540">
    <property type="entry name" value="P-loop containing nucleoside triphosphate hydrolases"/>
    <property type="match status" value="1"/>
</dbReference>
<dbReference type="SUPFAM" id="SSF75553">
    <property type="entry name" value="Smc hinge domain"/>
    <property type="match status" value="1"/>
</dbReference>
<feature type="chain" id="PRO_0000409273" description="Chromosome partition protein Smc">
    <location>
        <begin position="1"/>
        <end position="1165"/>
    </location>
</feature>
<feature type="domain" description="SMC hinge">
    <location>
        <begin position="518"/>
        <end position="630"/>
    </location>
</feature>
<feature type="coiled-coil region" evidence="1">
    <location>
        <begin position="161"/>
        <end position="503"/>
    </location>
</feature>
<feature type="coiled-coil region" evidence="1">
    <location>
        <begin position="672"/>
        <end position="901"/>
    </location>
</feature>
<feature type="coiled-coil region" evidence="1">
    <location>
        <begin position="946"/>
        <end position="1010"/>
    </location>
</feature>
<feature type="binding site" evidence="1">
    <location>
        <begin position="32"/>
        <end position="39"/>
    </location>
    <ligand>
        <name>ATP</name>
        <dbReference type="ChEBI" id="CHEBI:30616"/>
    </ligand>
</feature>
<proteinExistence type="inferred from homology"/>
<accession>Q7NG51</accession>
<keyword id="KW-0067">ATP-binding</keyword>
<keyword id="KW-0175">Coiled coil</keyword>
<keyword id="KW-0963">Cytoplasm</keyword>
<keyword id="KW-0238">DNA-binding</keyword>
<keyword id="KW-0547">Nucleotide-binding</keyword>
<keyword id="KW-1185">Reference proteome</keyword>
<organism>
    <name type="scientific">Gloeobacter violaceus (strain ATCC 29082 / PCC 7421)</name>
    <dbReference type="NCBI Taxonomy" id="251221"/>
    <lineage>
        <taxon>Bacteria</taxon>
        <taxon>Bacillati</taxon>
        <taxon>Cyanobacteriota</taxon>
        <taxon>Cyanophyceae</taxon>
        <taxon>Gloeobacterales</taxon>
        <taxon>Gloeobacteraceae</taxon>
        <taxon>Gloeobacter</taxon>
    </lineage>
</organism>
<gene>
    <name evidence="1" type="primary">smc</name>
    <name type="ordered locus">glr3322</name>
</gene>
<protein>
    <recommendedName>
        <fullName evidence="1">Chromosome partition protein Smc</fullName>
    </recommendedName>
</protein>
<comment type="function">
    <text evidence="1">Required for chromosome condensation and partitioning.</text>
</comment>
<comment type="subunit">
    <text evidence="1">Homodimer.</text>
</comment>
<comment type="subcellular location">
    <subcellularLocation>
        <location evidence="1">Cytoplasm</location>
    </subcellularLocation>
</comment>
<comment type="domain">
    <text evidence="1">Contains large globular domains required for ATP hydrolysis at each terminus and a third globular domain forming a flexible SMC hinge near the middle of the molecule. These domains are separated by coiled-coil structures.</text>
</comment>
<comment type="similarity">
    <text evidence="1">Belongs to the SMC family.</text>
</comment>
<sequence length="1165" mass="131255">MHLKCLEIERFKSFGPYTRIPLLEGFTVVSGPNGSGKSNIIDALLFALGLSTSRGMRAEKLSDLIHQGAAKGEVAVTVTFALDAAAGGGELTVCRRLKVNGPNSTSSYQLNGSPCTLTDLHEELARHHIYPEGYNVVLQGDVTGIIAMPARERREIIDELAGVAEFDRKIEAARRELGEVEVRSDRIQAVVSELLEQMERLQKERAKAEEYRKLRAELGELALWEHLLSVRSLEAQIAQITSQLAAAEAVLAGFDREAEALAERCEQALDELDTANTRVKAMGENEQVALRTQMASVQAQRAQAEAALADLAQQQRQAQGRQQQLELELGELALTLTGFSRRQQDQQALVAQWTARLESDRQVLETSRNDLEQLSASSRRWVEEQSQLRRRLDQLQSEHDPLQRTLDRLGDRLVQATGEGERHREELARIEAGHAQLATEAKVAQERLAAARTRLEQTRADLEAERAQILADRTTQRRLEKERTEKARELDRLETQRQVWREAEGSRATQEVLGSGIQGVHGLISQLGRVEAQYQGALEVAAGNRLNNVVVEDDAVAAQAIELLKSRRAGRATFLPLNKLRSGRYLERLHEEGAIGYALDLIEFDRRYEAAFVQVFGDTVVFRSLELARRQLGRYRMVTMAGELLEKSGAMTGGSLDARRGGSGFALSEPPELAEMRARLGDLDRLLATLAERLERREQRAHELQSAAEAAQRELVAIENRAEQLGREHSTQQARATQLRVFLDSCQVGLEADRQEQADLAARLGPLREQIVQVREELAKLEQSDNHHRWQQSQQHLRELETEVRRWELQLRHAEADLQKSHLDEQLAQEKRQNLLSRRLDWEDQKVEFGQREEESRTRLAEFDRVIAELAAQVAELEERLVDIKRERDRLEAHGRALQQRQGQLNLQREQERLHQGQRAAALAAAQERLDELGPPAEDVPPPPEDLSLEQLQATRLRKQRRLEALEPVNMLAIEEYDRTAERQGELSEKLATLQRERSELLLRIEDCDTLKRSAFMQAFDAVNTHFQSLFAELSDGDGHLALEDPDNPFAGGLTLVAHPRGKQVRRLEAMSGGEKSLTALSFIFALQRYRPSPFYAFDEVDMFLDGANVERLAKMVRQQANSTQFLVVSLRRPMIERADRAIGVTLARAGHSQVLGVKLAADAS</sequence>
<reference key="1">
    <citation type="journal article" date="2003" name="DNA Res.">
        <title>Complete genome structure of Gloeobacter violaceus PCC 7421, a cyanobacterium that lacks thylakoids.</title>
        <authorList>
            <person name="Nakamura Y."/>
            <person name="Kaneko T."/>
            <person name="Sato S."/>
            <person name="Mimuro M."/>
            <person name="Miyashita H."/>
            <person name="Tsuchiya T."/>
            <person name="Sasamoto S."/>
            <person name="Watanabe A."/>
            <person name="Kawashima K."/>
            <person name="Kishida Y."/>
            <person name="Kiyokawa C."/>
            <person name="Kohara M."/>
            <person name="Matsumoto M."/>
            <person name="Matsuno A."/>
            <person name="Nakazaki N."/>
            <person name="Shimpo S."/>
            <person name="Takeuchi C."/>
            <person name="Yamada M."/>
            <person name="Tabata S."/>
        </authorList>
    </citation>
    <scope>NUCLEOTIDE SEQUENCE [LARGE SCALE GENOMIC DNA]</scope>
    <source>
        <strain>ATCC 29082 / PCC 7421</strain>
    </source>
</reference>